<name>Y116_NPVAC</name>
<protein>
    <recommendedName>
        <fullName>Uncharacterized 6.4 kDa protein in HE65-PK2 intergenic region</fullName>
    </recommendedName>
</protein>
<organismHost>
    <name type="scientific">Lepidoptera</name>
    <name type="common">butterflies and moths</name>
    <dbReference type="NCBI Taxonomy" id="7088"/>
</organismHost>
<feature type="chain" id="PRO_0000133055" description="Uncharacterized 6.4 kDa protein in HE65-PK2 intergenic region">
    <location>
        <begin position="1"/>
        <end position="56"/>
    </location>
</feature>
<dbReference type="EMBL" id="L22858">
    <property type="protein sequence ID" value="AAA66746.1"/>
    <property type="molecule type" value="Genomic_DNA"/>
</dbReference>
<dbReference type="PIR" id="E72864">
    <property type="entry name" value="E72864"/>
</dbReference>
<dbReference type="RefSeq" id="NP_054146.1">
    <property type="nucleotide sequence ID" value="NC_001623.1"/>
</dbReference>
<dbReference type="GeneID" id="1403949"/>
<dbReference type="KEGG" id="vg:1403949"/>
<dbReference type="OrthoDB" id="37159at10239"/>
<dbReference type="Proteomes" id="UP000008292">
    <property type="component" value="Segment"/>
</dbReference>
<dbReference type="InterPro" id="IPR035138">
    <property type="entry name" value="DUF5485"/>
</dbReference>
<dbReference type="Pfam" id="PF17586">
    <property type="entry name" value="DUF5485"/>
    <property type="match status" value="1"/>
</dbReference>
<sequence>MYFTSRFLSALGTSNTLAVRCMTVKMNAVDAELYRPRFIFCATSHFVRHTTLFTLS</sequence>
<keyword id="KW-1185">Reference proteome</keyword>
<organism>
    <name type="scientific">Autographa californica nuclear polyhedrosis virus</name>
    <name type="common">AcMNPV</name>
    <dbReference type="NCBI Taxonomy" id="46015"/>
    <lineage>
        <taxon>Viruses</taxon>
        <taxon>Viruses incertae sedis</taxon>
        <taxon>Naldaviricetes</taxon>
        <taxon>Lefavirales</taxon>
        <taxon>Baculoviridae</taxon>
        <taxon>Alphabaculovirus</taxon>
        <taxon>Alphabaculovirus aucalifornicae</taxon>
    </lineage>
</organism>
<reference key="1">
    <citation type="journal article" date="1994" name="Virology">
        <title>The complete DNA sequence of Autographa californica nuclear polyhedrosis virus.</title>
        <authorList>
            <person name="Ayres M.D."/>
            <person name="Howard S.C."/>
            <person name="Kuzio J."/>
            <person name="Lopez-Ferber M."/>
            <person name="Possee R.D."/>
        </authorList>
    </citation>
    <scope>NUCLEOTIDE SEQUENCE [LARGE SCALE GENOMIC DNA]</scope>
    <source>
        <strain>C6</strain>
    </source>
</reference>
<accession>P41669</accession>
<proteinExistence type="predicted"/>